<organism>
    <name type="scientific">Shigella dysenteriae serotype 1 (strain Sd197)</name>
    <dbReference type="NCBI Taxonomy" id="300267"/>
    <lineage>
        <taxon>Bacteria</taxon>
        <taxon>Pseudomonadati</taxon>
        <taxon>Pseudomonadota</taxon>
        <taxon>Gammaproteobacteria</taxon>
        <taxon>Enterobacterales</taxon>
        <taxon>Enterobacteriaceae</taxon>
        <taxon>Shigella</taxon>
    </lineage>
</organism>
<comment type="function">
    <text evidence="1">F(1)F(0) ATP synthase produces ATP from ADP in the presence of a proton or sodium gradient. F-type ATPases consist of two structural domains, F(1) containing the extramembraneous catalytic core and F(0) containing the membrane proton channel, linked together by a central stalk and a peripheral stalk. During catalysis, ATP synthesis in the catalytic domain of F(1) is coupled via a rotary mechanism of the central stalk subunits to proton translocation.</text>
</comment>
<comment type="function">
    <text evidence="1">This protein is part of the stalk that links CF(0) to CF(1). It either transmits conformational changes from CF(0) to CF(1) or is implicated in proton conduction.</text>
</comment>
<comment type="subunit">
    <text evidence="1">F-type ATPases have 2 components, F(1) - the catalytic core - and F(0) - the membrane proton channel. F(1) has five subunits: alpha(3), beta(3), gamma(1), delta(1), epsilon(1). F(0) has three main subunits: a(1), b(2) and c(10-14). The alpha and beta chains form an alternating ring which encloses part of the gamma chain. F(1) is attached to F(0) by a central stalk formed by the gamma and epsilon chains, while a peripheral stalk is formed by the delta and b chains.</text>
</comment>
<comment type="subcellular location">
    <subcellularLocation>
        <location evidence="1">Cell inner membrane</location>
        <topology evidence="1">Peripheral membrane protein</topology>
    </subcellularLocation>
</comment>
<comment type="similarity">
    <text evidence="1">Belongs to the ATPase delta chain family.</text>
</comment>
<evidence type="ECO:0000255" key="1">
    <source>
        <dbReference type="HAMAP-Rule" id="MF_01416"/>
    </source>
</evidence>
<gene>
    <name evidence="1" type="primary">atpH</name>
    <name type="ordered locus">SDY_4013</name>
</gene>
<reference key="1">
    <citation type="journal article" date="2005" name="Nucleic Acids Res.">
        <title>Genome dynamics and diversity of Shigella species, the etiologic agents of bacillary dysentery.</title>
        <authorList>
            <person name="Yang F."/>
            <person name="Yang J."/>
            <person name="Zhang X."/>
            <person name="Chen L."/>
            <person name="Jiang Y."/>
            <person name="Yan Y."/>
            <person name="Tang X."/>
            <person name="Wang J."/>
            <person name="Xiong Z."/>
            <person name="Dong J."/>
            <person name="Xue Y."/>
            <person name="Zhu Y."/>
            <person name="Xu X."/>
            <person name="Sun L."/>
            <person name="Chen S."/>
            <person name="Nie H."/>
            <person name="Peng J."/>
            <person name="Xu J."/>
            <person name="Wang Y."/>
            <person name="Yuan Z."/>
            <person name="Wen Y."/>
            <person name="Yao Z."/>
            <person name="Shen Y."/>
            <person name="Qiang B."/>
            <person name="Hou Y."/>
            <person name="Yu J."/>
            <person name="Jin Q."/>
        </authorList>
    </citation>
    <scope>NUCLEOTIDE SEQUENCE [LARGE SCALE GENOMIC DNA]</scope>
    <source>
        <strain>Sd197</strain>
    </source>
</reference>
<name>ATPD_SHIDS</name>
<keyword id="KW-0066">ATP synthesis</keyword>
<keyword id="KW-0997">Cell inner membrane</keyword>
<keyword id="KW-1003">Cell membrane</keyword>
<keyword id="KW-0139">CF(1)</keyword>
<keyword id="KW-0375">Hydrogen ion transport</keyword>
<keyword id="KW-0406">Ion transport</keyword>
<keyword id="KW-0472">Membrane</keyword>
<keyword id="KW-1185">Reference proteome</keyword>
<keyword id="KW-0813">Transport</keyword>
<protein>
    <recommendedName>
        <fullName evidence="1">ATP synthase subunit delta</fullName>
    </recommendedName>
    <alternativeName>
        <fullName evidence="1">ATP synthase F(1) sector subunit delta</fullName>
    </alternativeName>
    <alternativeName>
        <fullName evidence="1">F-type ATPase subunit delta</fullName>
        <shortName evidence="1">F-ATPase subunit delta</shortName>
    </alternativeName>
</protein>
<dbReference type="EMBL" id="CP000034">
    <property type="protein sequence ID" value="ABB63931.1"/>
    <property type="molecule type" value="Genomic_DNA"/>
</dbReference>
<dbReference type="RefSeq" id="WP_001288590.1">
    <property type="nucleotide sequence ID" value="NC_007606.1"/>
</dbReference>
<dbReference type="RefSeq" id="YP_405422.1">
    <property type="nucleotide sequence ID" value="NC_007606.1"/>
</dbReference>
<dbReference type="SMR" id="Q329S4"/>
<dbReference type="STRING" id="300267.SDY_4013"/>
<dbReference type="EnsemblBacteria" id="ABB63931">
    <property type="protein sequence ID" value="ABB63931"/>
    <property type="gene ID" value="SDY_4013"/>
</dbReference>
<dbReference type="KEGG" id="sdy:SDY_4013"/>
<dbReference type="PATRIC" id="fig|300267.13.peg.4726"/>
<dbReference type="HOGENOM" id="CLU_085114_3_0_6"/>
<dbReference type="Proteomes" id="UP000002716">
    <property type="component" value="Chromosome"/>
</dbReference>
<dbReference type="GO" id="GO:0005886">
    <property type="term" value="C:plasma membrane"/>
    <property type="evidence" value="ECO:0007669"/>
    <property type="project" value="UniProtKB-SubCell"/>
</dbReference>
<dbReference type="GO" id="GO:0045259">
    <property type="term" value="C:proton-transporting ATP synthase complex"/>
    <property type="evidence" value="ECO:0007669"/>
    <property type="project" value="UniProtKB-KW"/>
</dbReference>
<dbReference type="GO" id="GO:0046933">
    <property type="term" value="F:proton-transporting ATP synthase activity, rotational mechanism"/>
    <property type="evidence" value="ECO:0007669"/>
    <property type="project" value="UniProtKB-UniRule"/>
</dbReference>
<dbReference type="FunFam" id="1.10.520.20:FF:000001">
    <property type="entry name" value="ATP synthase subunit delta"/>
    <property type="match status" value="1"/>
</dbReference>
<dbReference type="Gene3D" id="1.10.520.20">
    <property type="entry name" value="N-terminal domain of the delta subunit of the F1F0-ATP synthase"/>
    <property type="match status" value="1"/>
</dbReference>
<dbReference type="HAMAP" id="MF_01416">
    <property type="entry name" value="ATP_synth_delta_bact"/>
    <property type="match status" value="1"/>
</dbReference>
<dbReference type="InterPro" id="IPR026015">
    <property type="entry name" value="ATP_synth_OSCP/delta_N_sf"/>
</dbReference>
<dbReference type="InterPro" id="IPR020781">
    <property type="entry name" value="ATPase_OSCP/d_CS"/>
</dbReference>
<dbReference type="InterPro" id="IPR000711">
    <property type="entry name" value="ATPase_OSCP/dsu"/>
</dbReference>
<dbReference type="NCBIfam" id="TIGR01145">
    <property type="entry name" value="ATP_synt_delta"/>
    <property type="match status" value="1"/>
</dbReference>
<dbReference type="NCBIfam" id="NF004402">
    <property type="entry name" value="PRK05758.2-2"/>
    <property type="match status" value="1"/>
</dbReference>
<dbReference type="NCBIfam" id="NF004404">
    <property type="entry name" value="PRK05758.2-5"/>
    <property type="match status" value="1"/>
</dbReference>
<dbReference type="PANTHER" id="PTHR11910">
    <property type="entry name" value="ATP SYNTHASE DELTA CHAIN"/>
    <property type="match status" value="1"/>
</dbReference>
<dbReference type="Pfam" id="PF00213">
    <property type="entry name" value="OSCP"/>
    <property type="match status" value="1"/>
</dbReference>
<dbReference type="PRINTS" id="PR00125">
    <property type="entry name" value="ATPASEDELTA"/>
</dbReference>
<dbReference type="SUPFAM" id="SSF47928">
    <property type="entry name" value="N-terminal domain of the delta subunit of the F1F0-ATP synthase"/>
    <property type="match status" value="1"/>
</dbReference>
<dbReference type="PROSITE" id="PS00389">
    <property type="entry name" value="ATPASE_DELTA"/>
    <property type="match status" value="1"/>
</dbReference>
<accession>Q329S4</accession>
<feature type="chain" id="PRO_0000371140" description="ATP synthase subunit delta">
    <location>
        <begin position="1"/>
        <end position="177"/>
    </location>
</feature>
<sequence length="177" mass="19362">MSEFITVARPYAKAAFDFAVEHQSVERWQDMLAFAAEVTKNEQMAELLSGALAPETLAESFIAVCGEQLDENSQNLIRVMAENGRLNALPDVLEQFIHLRAVSEATAEVDVISAAALSEQQLAKISAAMEKRLSRKVKLNCKIDKSVMAGVIIRAGDMVIDGSVRGRLERLADVLQS</sequence>
<proteinExistence type="inferred from homology"/>